<keyword id="KW-0903">Direct protein sequencing</keyword>
<keyword id="KW-1185">Reference proteome</keyword>
<protein>
    <recommendedName>
        <fullName>Leydig cell tumor 10 kDa protein</fullName>
    </recommendedName>
</protein>
<accession>Q05310</accession>
<feature type="chain" id="PRO_0000084344" description="Leydig cell tumor 10 kDa protein">
    <location>
        <begin position="1"/>
        <end position="93"/>
    </location>
</feature>
<feature type="region of interest" description="Disordered" evidence="1">
    <location>
        <begin position="1"/>
        <end position="41"/>
    </location>
</feature>
<feature type="compositionally biased region" description="Low complexity" evidence="1">
    <location>
        <begin position="7"/>
        <end position="18"/>
    </location>
</feature>
<feature type="compositionally biased region" description="Basic residues" evidence="1">
    <location>
        <begin position="25"/>
        <end position="39"/>
    </location>
</feature>
<proteinExistence type="evidence at protein level"/>
<organism>
    <name type="scientific">Rattus norvegicus</name>
    <name type="common">Rat</name>
    <dbReference type="NCBI Taxonomy" id="10116"/>
    <lineage>
        <taxon>Eukaryota</taxon>
        <taxon>Metazoa</taxon>
        <taxon>Chordata</taxon>
        <taxon>Craniata</taxon>
        <taxon>Vertebrata</taxon>
        <taxon>Euteleostomi</taxon>
        <taxon>Mammalia</taxon>
        <taxon>Eutheria</taxon>
        <taxon>Euarchontoglires</taxon>
        <taxon>Glires</taxon>
        <taxon>Rodentia</taxon>
        <taxon>Myomorpha</taxon>
        <taxon>Muroidea</taxon>
        <taxon>Muridae</taxon>
        <taxon>Murinae</taxon>
        <taxon>Rattus</taxon>
    </lineage>
</organism>
<reference key="1">
    <citation type="journal article" date="1992" name="Biochim. Biophys. Acta">
        <title>Nucleotide and (derived) amino acid sequence of a novel peptide from a rat (hypercalcemic) Leydig cell tumor.</title>
        <authorList>
            <person name="Rabbani S.A."/>
            <person name="Yasuda T."/>
            <person name="Bennett H.P.J."/>
            <person name="Hendy G.N."/>
            <person name="Banville D."/>
        </authorList>
    </citation>
    <scope>NUCLEOTIDE SEQUENCE [MRNA]</scope>
    <scope>PARTIAL PROTEIN SEQUENCE</scope>
</reference>
<dbReference type="EMBL" id="X62277">
    <property type="protein sequence ID" value="CAA44167.1"/>
    <property type="molecule type" value="mRNA"/>
</dbReference>
<dbReference type="PIR" id="S28223">
    <property type="entry name" value="S28223"/>
</dbReference>
<dbReference type="RefSeq" id="NP_942023.1">
    <property type="nucleotide sequence ID" value="NM_198728.1"/>
</dbReference>
<dbReference type="SMR" id="Q05310"/>
<dbReference type="FunCoup" id="Q05310">
    <property type="interactions" value="590"/>
</dbReference>
<dbReference type="STRING" id="10116.ENSRNOP00000066410"/>
<dbReference type="GlyGen" id="Q05310">
    <property type="glycosylation" value="1 site"/>
</dbReference>
<dbReference type="PhosphoSitePlus" id="Q05310"/>
<dbReference type="PaxDb" id="10116-ENSRNOP00000066410"/>
<dbReference type="GeneID" id="288913"/>
<dbReference type="KEGG" id="rno:288913"/>
<dbReference type="AGR" id="RGD:735128"/>
<dbReference type="CTD" id="288913"/>
<dbReference type="RGD" id="735128">
    <property type="gene designation" value="C19h19orf53"/>
</dbReference>
<dbReference type="eggNOG" id="ENOG502S8BT">
    <property type="taxonomic scope" value="Eukaryota"/>
</dbReference>
<dbReference type="InParanoid" id="Q05310"/>
<dbReference type="PhylomeDB" id="Q05310"/>
<dbReference type="PRO" id="PR:Q05310"/>
<dbReference type="Proteomes" id="UP000002494">
    <property type="component" value="Unplaced"/>
</dbReference>
<dbReference type="InterPro" id="IPR019034">
    <property type="entry name" value="UPF0390"/>
</dbReference>
<dbReference type="PANTHER" id="PTHR16967">
    <property type="entry name" value="LEYDIG CELL TUMOR 10 KDA PROTEIN HOMOLOG"/>
    <property type="match status" value="1"/>
</dbReference>
<dbReference type="PANTHER" id="PTHR16967:SF1">
    <property type="entry name" value="LEYDIG CELL TUMOR 10 KDA PROTEIN HOMOLOG"/>
    <property type="match status" value="1"/>
</dbReference>
<dbReference type="Pfam" id="PF09495">
    <property type="entry name" value="DUF2462"/>
    <property type="match status" value="1"/>
</dbReference>
<evidence type="ECO:0000256" key="1">
    <source>
        <dbReference type="SAM" id="MobiDB-lite"/>
    </source>
</evidence>
<evidence type="ECO:0000305" key="2"/>
<name>L10K_RAT</name>
<comment type="function">
    <text>May have a potential role in hypercalcemia of malignancy.</text>
</comment>
<comment type="tissue specificity">
    <text>Leydig cell tumor, testis and placenta.</text>
</comment>
<comment type="similarity">
    <text evidence="2">Belongs to the UPF0390 family.</text>
</comment>
<sequence length="93" mass="9984">MAQGQRKFQAQKPKSKAAAAERSRGPRKGGRVIGPKKARVVQQQKLKKSLEVGIRKKIEHDVVMKASSSLPKKLALLKGASKKTGATPGKTPS</sequence>